<keyword id="KW-0903">Direct protein sequencing</keyword>
<keyword id="KW-1015">Disulfide bond</keyword>
<keyword id="KW-0960">Knottin</keyword>
<keyword id="KW-0611">Plant defense</keyword>
<organism>
    <name type="scientific">Hybanthus floribundus</name>
    <name type="common">Greenviolet</name>
    <dbReference type="NCBI Taxonomy" id="343459"/>
    <lineage>
        <taxon>Eukaryota</taxon>
        <taxon>Viridiplantae</taxon>
        <taxon>Streptophyta</taxon>
        <taxon>Embryophyta</taxon>
        <taxon>Tracheophyta</taxon>
        <taxon>Spermatophyta</taxon>
        <taxon>Magnoliopsida</taxon>
        <taxon>eudicotyledons</taxon>
        <taxon>Gunneridae</taxon>
        <taxon>Pentapetalae</taxon>
        <taxon>rosids</taxon>
        <taxon>fabids</taxon>
        <taxon>Malpighiales</taxon>
        <taxon>Violaceae</taxon>
        <taxon>Hybanthus</taxon>
    </lineage>
</organism>
<protein>
    <recommendedName>
        <fullName>Cyclotide Hyfl-A</fullName>
    </recommendedName>
</protein>
<name>HYFLA_HYBFL</name>
<accession>P84647</accession>
<evidence type="ECO:0000250" key="1">
    <source>
        <dbReference type="UniProtKB" id="P82230"/>
    </source>
</evidence>
<evidence type="ECO:0000255" key="2">
    <source>
        <dbReference type="PROSITE-ProRule" id="PRU00395"/>
    </source>
</evidence>
<evidence type="ECO:0000269" key="3">
    <source>
    </source>
</evidence>
<evidence type="ECO:0000305" key="4"/>
<reference evidence="4" key="1">
    <citation type="journal article" date="2005" name="Plant Cell">
        <title>A continent of plant defense peptide diversity: cyclotides in Australian Hybanthus (Violaceae).</title>
        <authorList>
            <person name="Simonsen S.M."/>
            <person name="Sando L."/>
            <person name="Ireland D.C."/>
            <person name="Colgrave M.L."/>
            <person name="Bharathi R."/>
            <person name="Goeransson U."/>
            <person name="Craik D.J."/>
        </authorList>
    </citation>
    <scope>PROTEIN SEQUENCE</scope>
</reference>
<comment type="function">
    <text evidence="4">Probably participates in a plant defense mechanism.</text>
</comment>
<comment type="domain">
    <text evidence="1">The presence of a 'disulfide through disulfide knot' structurally defines this protein as a knottin.</text>
</comment>
<comment type="PTM">
    <text evidence="2 3">This is a cyclic peptide.</text>
</comment>
<comment type="similarity">
    <text evidence="2">Belongs to the cyclotide family. Bracelet subfamily.</text>
</comment>
<comment type="caution">
    <text evidence="4">This peptide is cyclic. The start position was chosen by similarity to OAK1 (kalata-B1) for which the DNA sequence is known.</text>
</comment>
<feature type="peptide" id="PRO_0000044705" description="Cyclotide Hyfl-A">
    <location>
        <begin position="1"/>
        <end position="31"/>
    </location>
</feature>
<feature type="disulfide bond" evidence="1 2">
    <location>
        <begin position="4"/>
        <end position="21"/>
    </location>
</feature>
<feature type="disulfide bond" evidence="1 2">
    <location>
        <begin position="8"/>
        <end position="23"/>
    </location>
</feature>
<feature type="disulfide bond" evidence="1 2">
    <location>
        <begin position="13"/>
        <end position="28"/>
    </location>
</feature>
<feature type="cross-link" description="Cyclopeptide (Ser-Asn)" evidence="3">
    <location>
        <begin position="1"/>
        <end position="31"/>
    </location>
</feature>
<dbReference type="SMR" id="P84647"/>
<dbReference type="GO" id="GO:0006952">
    <property type="term" value="P:defense response"/>
    <property type="evidence" value="ECO:0007669"/>
    <property type="project" value="UniProtKB-KW"/>
</dbReference>
<dbReference type="InterPro" id="IPR005535">
    <property type="entry name" value="Cyclotide"/>
</dbReference>
<dbReference type="InterPro" id="IPR012323">
    <property type="entry name" value="Cyclotide_bracelet_CS"/>
</dbReference>
<dbReference type="InterPro" id="IPR036146">
    <property type="entry name" value="Cyclotide_sf"/>
</dbReference>
<dbReference type="Pfam" id="PF03784">
    <property type="entry name" value="Cyclotide"/>
    <property type="match status" value="1"/>
</dbReference>
<dbReference type="PIRSF" id="PIRSF037891">
    <property type="entry name" value="Cycloviolacin"/>
    <property type="match status" value="1"/>
</dbReference>
<dbReference type="SUPFAM" id="SSF57038">
    <property type="entry name" value="Cyclotides"/>
    <property type="match status" value="1"/>
</dbReference>
<dbReference type="PROSITE" id="PS51052">
    <property type="entry name" value="CYCLOTIDE"/>
    <property type="match status" value="1"/>
</dbReference>
<dbReference type="PROSITE" id="PS60008">
    <property type="entry name" value="CYCLOTIDE_BRACELET"/>
    <property type="match status" value="1"/>
</dbReference>
<sequence>SISCGESCVYIPCTVTALVGCTCKDKVCYLN</sequence>
<proteinExistence type="evidence at protein level"/>